<gene>
    <name evidence="1" type="primary">uppP2</name>
    <name type="synonym">bacA2</name>
    <name type="synonym">upk2</name>
    <name type="ordered locus">SAV_7021</name>
</gene>
<comment type="function">
    <text evidence="1">Catalyzes the dephosphorylation of undecaprenyl diphosphate (UPP). Confers resistance to bacitracin.</text>
</comment>
<comment type="catalytic activity">
    <reaction evidence="1">
        <text>di-trans,octa-cis-undecaprenyl diphosphate + H2O = di-trans,octa-cis-undecaprenyl phosphate + phosphate + H(+)</text>
        <dbReference type="Rhea" id="RHEA:28094"/>
        <dbReference type="ChEBI" id="CHEBI:15377"/>
        <dbReference type="ChEBI" id="CHEBI:15378"/>
        <dbReference type="ChEBI" id="CHEBI:43474"/>
        <dbReference type="ChEBI" id="CHEBI:58405"/>
        <dbReference type="ChEBI" id="CHEBI:60392"/>
        <dbReference type="EC" id="3.6.1.27"/>
    </reaction>
</comment>
<comment type="subcellular location">
    <subcellularLocation>
        <location evidence="1">Cell membrane</location>
        <topology evidence="1">Multi-pass membrane protein</topology>
    </subcellularLocation>
</comment>
<comment type="miscellaneous">
    <text>Bacitracin is thought to be involved in the inhibition of peptidoglycan synthesis by sequestering undecaprenyl diphosphate, thereby reducing the pool of lipid carrier available.</text>
</comment>
<comment type="similarity">
    <text evidence="1">Belongs to the UppP family.</text>
</comment>
<feature type="chain" id="PRO_0000151210" description="Undecaprenyl-diphosphatase 2">
    <location>
        <begin position="1"/>
        <end position="291"/>
    </location>
</feature>
<feature type="transmembrane region" description="Helical" evidence="1">
    <location>
        <begin position="39"/>
        <end position="59"/>
    </location>
</feature>
<feature type="transmembrane region" description="Helical" evidence="1">
    <location>
        <begin position="85"/>
        <end position="105"/>
    </location>
</feature>
<feature type="transmembrane region" description="Helical" evidence="1">
    <location>
        <begin position="118"/>
        <end position="138"/>
    </location>
</feature>
<feature type="transmembrane region" description="Helical" evidence="1">
    <location>
        <begin position="203"/>
        <end position="223"/>
    </location>
</feature>
<feature type="transmembrane region" description="Helical" evidence="1">
    <location>
        <begin position="231"/>
        <end position="251"/>
    </location>
</feature>
<feature type="transmembrane region" description="Helical" evidence="1">
    <location>
        <begin position="262"/>
        <end position="282"/>
    </location>
</feature>
<proteinExistence type="inferred from homology"/>
<keyword id="KW-0046">Antibiotic resistance</keyword>
<keyword id="KW-1003">Cell membrane</keyword>
<keyword id="KW-0133">Cell shape</keyword>
<keyword id="KW-0961">Cell wall biogenesis/degradation</keyword>
<keyword id="KW-0378">Hydrolase</keyword>
<keyword id="KW-0472">Membrane</keyword>
<keyword id="KW-0573">Peptidoglycan synthesis</keyword>
<keyword id="KW-1185">Reference proteome</keyword>
<keyword id="KW-0812">Transmembrane</keyword>
<keyword id="KW-1133">Transmembrane helix</keyword>
<sequence length="291" mass="31149">MSWFESLILGLVQGLTEFLPVSSSAHLRLTAAFAGWEDPGAAFTAITQIGTEAAVLIYFRKDIARIISAWFRSLVNKEMRHDHDAQMGWLVIVGSIPIGVLGVTLKDQIEGPFRDLRITATMLIVMGVILGIADRLAARDETGGKHRAAKERKKLQDLNIRDGLVFGACQAMALIPGVSRSGATISGGLLIGYTRESAARYSFLLAIPAVLASGVFELKDAAASGHVAWGPTVFATVIAFVSGYAVIAWFMKFISNKSFMPFVWYRIALGIAIIALVATGALSPHAAESAG</sequence>
<reference key="1">
    <citation type="journal article" date="2001" name="Proc. Natl. Acad. Sci. U.S.A.">
        <title>Genome sequence of an industrial microorganism Streptomyces avermitilis: deducing the ability of producing secondary metabolites.</title>
        <authorList>
            <person name="Omura S."/>
            <person name="Ikeda H."/>
            <person name="Ishikawa J."/>
            <person name="Hanamoto A."/>
            <person name="Takahashi C."/>
            <person name="Shinose M."/>
            <person name="Takahashi Y."/>
            <person name="Horikawa H."/>
            <person name="Nakazawa H."/>
            <person name="Osonoe T."/>
            <person name="Kikuchi H."/>
            <person name="Shiba T."/>
            <person name="Sakaki Y."/>
            <person name="Hattori M."/>
        </authorList>
    </citation>
    <scope>NUCLEOTIDE SEQUENCE [LARGE SCALE GENOMIC DNA]</scope>
    <source>
        <strain>ATCC 31267 / DSM 46492 / JCM 5070 / NBRC 14893 / NCIMB 12804 / NRRL 8165 / MA-4680</strain>
    </source>
</reference>
<reference key="2">
    <citation type="journal article" date="2003" name="Nat. Biotechnol.">
        <title>Complete genome sequence and comparative analysis of the industrial microorganism Streptomyces avermitilis.</title>
        <authorList>
            <person name="Ikeda H."/>
            <person name="Ishikawa J."/>
            <person name="Hanamoto A."/>
            <person name="Shinose M."/>
            <person name="Kikuchi H."/>
            <person name="Shiba T."/>
            <person name="Sakaki Y."/>
            <person name="Hattori M."/>
            <person name="Omura S."/>
        </authorList>
    </citation>
    <scope>NUCLEOTIDE SEQUENCE [LARGE SCALE GENOMIC DNA]</scope>
    <source>
        <strain>ATCC 31267 / DSM 46492 / JCM 5070 / NBRC 14893 / NCIMB 12804 / NRRL 8165 / MA-4680</strain>
    </source>
</reference>
<evidence type="ECO:0000255" key="1">
    <source>
        <dbReference type="HAMAP-Rule" id="MF_01006"/>
    </source>
</evidence>
<organism>
    <name type="scientific">Streptomyces avermitilis (strain ATCC 31267 / DSM 46492 / JCM 5070 / NBRC 14893 / NCIMB 12804 / NRRL 8165 / MA-4680)</name>
    <dbReference type="NCBI Taxonomy" id="227882"/>
    <lineage>
        <taxon>Bacteria</taxon>
        <taxon>Bacillati</taxon>
        <taxon>Actinomycetota</taxon>
        <taxon>Actinomycetes</taxon>
        <taxon>Kitasatosporales</taxon>
        <taxon>Streptomycetaceae</taxon>
        <taxon>Streptomyces</taxon>
    </lineage>
</organism>
<name>UPPP2_STRAW</name>
<protein>
    <recommendedName>
        <fullName evidence="1">Undecaprenyl-diphosphatase 2</fullName>
        <ecNumber evidence="1">3.6.1.27</ecNumber>
    </recommendedName>
    <alternativeName>
        <fullName evidence="1">Bacitracin resistance protein 2</fullName>
    </alternativeName>
    <alternativeName>
        <fullName evidence="1">Undecaprenyl pyrophosphate phosphatase 2</fullName>
    </alternativeName>
</protein>
<accession>Q827A4</accession>
<dbReference type="EC" id="3.6.1.27" evidence="1"/>
<dbReference type="EMBL" id="BA000030">
    <property type="protein sequence ID" value="BAC74732.1"/>
    <property type="molecule type" value="Genomic_DNA"/>
</dbReference>
<dbReference type="RefSeq" id="WP_010988416.1">
    <property type="nucleotide sequence ID" value="NZ_JZJK01000085.1"/>
</dbReference>
<dbReference type="SMR" id="Q827A4"/>
<dbReference type="GeneID" id="41544096"/>
<dbReference type="KEGG" id="sma:SAVERM_7021"/>
<dbReference type="eggNOG" id="COG1968">
    <property type="taxonomic scope" value="Bacteria"/>
</dbReference>
<dbReference type="HOGENOM" id="CLU_060296_1_0_11"/>
<dbReference type="OrthoDB" id="9808289at2"/>
<dbReference type="Proteomes" id="UP000000428">
    <property type="component" value="Chromosome"/>
</dbReference>
<dbReference type="GO" id="GO:0005886">
    <property type="term" value="C:plasma membrane"/>
    <property type="evidence" value="ECO:0007669"/>
    <property type="project" value="UniProtKB-SubCell"/>
</dbReference>
<dbReference type="GO" id="GO:0050380">
    <property type="term" value="F:undecaprenyl-diphosphatase activity"/>
    <property type="evidence" value="ECO:0007669"/>
    <property type="project" value="UniProtKB-UniRule"/>
</dbReference>
<dbReference type="GO" id="GO:0071555">
    <property type="term" value="P:cell wall organization"/>
    <property type="evidence" value="ECO:0007669"/>
    <property type="project" value="UniProtKB-KW"/>
</dbReference>
<dbReference type="GO" id="GO:0009252">
    <property type="term" value="P:peptidoglycan biosynthetic process"/>
    <property type="evidence" value="ECO:0007669"/>
    <property type="project" value="UniProtKB-KW"/>
</dbReference>
<dbReference type="GO" id="GO:0008360">
    <property type="term" value="P:regulation of cell shape"/>
    <property type="evidence" value="ECO:0007669"/>
    <property type="project" value="UniProtKB-KW"/>
</dbReference>
<dbReference type="GO" id="GO:0046677">
    <property type="term" value="P:response to antibiotic"/>
    <property type="evidence" value="ECO:0007669"/>
    <property type="project" value="UniProtKB-UniRule"/>
</dbReference>
<dbReference type="HAMAP" id="MF_01006">
    <property type="entry name" value="Undec_diphosphatase"/>
    <property type="match status" value="1"/>
</dbReference>
<dbReference type="InterPro" id="IPR003824">
    <property type="entry name" value="UppP"/>
</dbReference>
<dbReference type="NCBIfam" id="NF001392">
    <property type="entry name" value="PRK00281.2-1"/>
    <property type="match status" value="1"/>
</dbReference>
<dbReference type="NCBIfam" id="TIGR00753">
    <property type="entry name" value="undec_PP_bacA"/>
    <property type="match status" value="1"/>
</dbReference>
<dbReference type="PANTHER" id="PTHR30622">
    <property type="entry name" value="UNDECAPRENYL-DIPHOSPHATASE"/>
    <property type="match status" value="1"/>
</dbReference>
<dbReference type="PANTHER" id="PTHR30622:SF4">
    <property type="entry name" value="UNDECAPRENYL-DIPHOSPHATASE"/>
    <property type="match status" value="1"/>
</dbReference>
<dbReference type="Pfam" id="PF02673">
    <property type="entry name" value="BacA"/>
    <property type="match status" value="1"/>
</dbReference>